<name>ELOV6_RAT</name>
<reference key="1">
    <citation type="journal article" date="2002" name="Biosci. Biotechnol. Biochem.">
        <title>Identification and expression of a rat fatty acid elongase involved in the biosynthesis of C18 fatty acids.</title>
        <authorList>
            <person name="Inagaki K."/>
            <person name="Aki T."/>
            <person name="Fukuda Y."/>
            <person name="Kawamoto S."/>
            <person name="Shigeta S."/>
            <person name="Ono K."/>
            <person name="Suzuki O."/>
        </authorList>
    </citation>
    <scope>NUCLEOTIDE SEQUENCE [MRNA]</scope>
    <scope>FUNCTION</scope>
    <scope>CATALYTIC ACTIVITY</scope>
    <scope>TISSUE SPECIFICITY</scope>
    <source>
        <strain>Sprague-Dawley</strain>
        <tissue>Liver</tissue>
    </source>
</reference>
<reference key="2">
    <citation type="journal article" date="2010" name="J. Lipid Res.">
        <title>Role of fatty acid elongases in determination of de novo synthesized monounsaturated fatty acid species.</title>
        <authorList>
            <person name="Green C.D."/>
            <person name="Ozguden-Akkoc C.G."/>
            <person name="Wang Y."/>
            <person name="Jump D.B."/>
            <person name="Olson L.K."/>
        </authorList>
    </citation>
    <scope>FUNCTION</scope>
    <scope>CATALYTIC ACTIVITY</scope>
    <scope>PATHWAY</scope>
</reference>
<protein>
    <recommendedName>
        <fullName evidence="3 6">Very long chain fatty acid elongase 6</fullName>
        <ecNumber evidence="3 4 5">2.3.1.199</ecNumber>
    </recommendedName>
    <alternativeName>
        <fullName evidence="3">3-keto acyl-CoA synthase Elovl6</fullName>
    </alternativeName>
    <alternativeName>
        <fullName evidence="3">ELOVL fatty acid elongase 6</fullName>
        <shortName evidence="3">ELOVL FA elongase 6</shortName>
    </alternativeName>
    <alternativeName>
        <fullName evidence="3">Elongation of very long chain fatty acids protein 6</fullName>
    </alternativeName>
    <alternativeName>
        <fullName>Fatty acid elongase 2</fullName>
        <shortName>rELO2</shortName>
    </alternativeName>
    <alternativeName>
        <fullName>Fatty acyl-CoA elongase</fullName>
    </alternativeName>
    <alternativeName>
        <fullName>Long-chain fatty-acyl elongase</fullName>
    </alternativeName>
    <alternativeName>
        <fullName evidence="3">Very long chain 3-ketoacyl-CoA synthase 6</fullName>
    </alternativeName>
    <alternativeName>
        <fullName evidence="3">Very long chain 3-oxoacyl-CoA synthase 6</fullName>
    </alternativeName>
</protein>
<evidence type="ECO:0000250" key="1">
    <source>
        <dbReference type="UniProtKB" id="Q920L5"/>
    </source>
</evidence>
<evidence type="ECO:0000250" key="2">
    <source>
        <dbReference type="UniProtKB" id="Q9H5J4"/>
    </source>
</evidence>
<evidence type="ECO:0000255" key="3">
    <source>
        <dbReference type="HAMAP-Rule" id="MF_03206"/>
    </source>
</evidence>
<evidence type="ECO:0000269" key="4">
    <source>
    </source>
</evidence>
<evidence type="ECO:0000269" key="5">
    <source>
    </source>
</evidence>
<evidence type="ECO:0000305" key="6"/>
<accession>Q920L6</accession>
<organism>
    <name type="scientific">Rattus norvegicus</name>
    <name type="common">Rat</name>
    <dbReference type="NCBI Taxonomy" id="10116"/>
    <lineage>
        <taxon>Eukaryota</taxon>
        <taxon>Metazoa</taxon>
        <taxon>Chordata</taxon>
        <taxon>Craniata</taxon>
        <taxon>Vertebrata</taxon>
        <taxon>Euteleostomi</taxon>
        <taxon>Mammalia</taxon>
        <taxon>Eutheria</taxon>
        <taxon>Euarchontoglires</taxon>
        <taxon>Glires</taxon>
        <taxon>Rodentia</taxon>
        <taxon>Myomorpha</taxon>
        <taxon>Muroidea</taxon>
        <taxon>Muridae</taxon>
        <taxon>Murinae</taxon>
        <taxon>Rattus</taxon>
    </lineage>
</organism>
<sequence>MNMSVLTLQEYEFEKQFNENEAIQWMQENWKKSFLFSALYAAFIFGGRHLMNKRAKFELRKPLVLWSLTLAVFSIFGALRTGAYMLYILMTKGLKQSVCDQSFYNGPVSKFWAYAFVLSKAPELGDTIFIILRKQKLIFLHWYHHITVLLYSWYSYKDMVAGGGWFMTMNYGVHAVMYSYYALRAAGFRVSRKFAMFITLSQITQMLMGCVINYLVFNWMQHDNDQCYSHFQNIFWSSLMYLSYLLLFCHFFFEAYIGKVKKATKAE</sequence>
<comment type="function">
    <text evidence="3 4 5">Catalyzes the first and rate-limiting reaction of the four reactions that constitute the long-chain fatty acids elongation cycle. This endoplasmic reticulum-bound enzymatic process allows the addition of 2 carbons to the chain of long- and very long-chain fatty acids (VLCFAs) per cycle. Condensing enzyme that elongates fatty acids with 12, 14 and 16 carbons with higher activity toward C16:0 acyl-CoAs. Catalyzes the synthesis of unsaturated C16 long chain fatty acids and, to a lesser extent, C18:0 and those with low desaturation degree. May participate in the production of saturated and monounsaturated VLCFAs of different chain lengths that are involved in multiple biological processes as precursors of membrane lipids and lipid mediators.</text>
</comment>
<comment type="catalytic activity">
    <reaction evidence="3 4 5">
        <text>a very-long-chain acyl-CoA + malonyl-CoA + H(+) = a very-long-chain 3-oxoacyl-CoA + CO2 + CoA</text>
        <dbReference type="Rhea" id="RHEA:32727"/>
        <dbReference type="ChEBI" id="CHEBI:15378"/>
        <dbReference type="ChEBI" id="CHEBI:16526"/>
        <dbReference type="ChEBI" id="CHEBI:57287"/>
        <dbReference type="ChEBI" id="CHEBI:57384"/>
        <dbReference type="ChEBI" id="CHEBI:90725"/>
        <dbReference type="ChEBI" id="CHEBI:90736"/>
        <dbReference type="EC" id="2.3.1.199"/>
    </reaction>
    <physiologicalReaction direction="left-to-right" evidence="5">
        <dbReference type="Rhea" id="RHEA:32728"/>
    </physiologicalReaction>
</comment>
<comment type="catalytic activity">
    <reaction evidence="5">
        <text>hexadecanoyl-CoA + malonyl-CoA + H(+) = 3-oxooctadecanoyl-CoA + CO2 + CoA</text>
        <dbReference type="Rhea" id="RHEA:35315"/>
        <dbReference type="ChEBI" id="CHEBI:15378"/>
        <dbReference type="ChEBI" id="CHEBI:16526"/>
        <dbReference type="ChEBI" id="CHEBI:57287"/>
        <dbReference type="ChEBI" id="CHEBI:57379"/>
        <dbReference type="ChEBI" id="CHEBI:57384"/>
        <dbReference type="ChEBI" id="CHEBI:71407"/>
    </reaction>
    <physiologicalReaction direction="left-to-right" evidence="5">
        <dbReference type="Rhea" id="RHEA:35316"/>
    </physiologicalReaction>
</comment>
<comment type="catalytic activity">
    <reaction evidence="1">
        <text>(9Z)-hexadecenoyl-CoA + malonyl-CoA + H(+) = 3-oxo-(11Z)-octadecenoyl-CoA + CO2 + CoA</text>
        <dbReference type="Rhea" id="RHEA:39675"/>
        <dbReference type="ChEBI" id="CHEBI:15378"/>
        <dbReference type="ChEBI" id="CHEBI:16526"/>
        <dbReference type="ChEBI" id="CHEBI:57287"/>
        <dbReference type="ChEBI" id="CHEBI:57384"/>
        <dbReference type="ChEBI" id="CHEBI:61540"/>
        <dbReference type="ChEBI" id="CHEBI:76555"/>
    </reaction>
    <physiologicalReaction direction="left-to-right" evidence="2">
        <dbReference type="Rhea" id="RHEA:39676"/>
    </physiologicalReaction>
</comment>
<comment type="catalytic activity">
    <reaction evidence="1">
        <text>dodecanoyl-CoA + malonyl-CoA + H(+) = 3-oxotetradecanoyl-CoA + CO2 + CoA</text>
        <dbReference type="Rhea" id="RHEA:60140"/>
        <dbReference type="ChEBI" id="CHEBI:15378"/>
        <dbReference type="ChEBI" id="CHEBI:16526"/>
        <dbReference type="ChEBI" id="CHEBI:57287"/>
        <dbReference type="ChEBI" id="CHEBI:57375"/>
        <dbReference type="ChEBI" id="CHEBI:57384"/>
        <dbReference type="ChEBI" id="CHEBI:62543"/>
    </reaction>
    <physiologicalReaction direction="left-to-right" evidence="1">
        <dbReference type="Rhea" id="RHEA:60141"/>
    </physiologicalReaction>
</comment>
<comment type="catalytic activity">
    <reaction evidence="2">
        <text>tetradecanoyl-CoA + malonyl-CoA + H(+) = 3-oxohexadecanoyl-CoA + CO2 + CoA</text>
        <dbReference type="Rhea" id="RHEA:39167"/>
        <dbReference type="ChEBI" id="CHEBI:15378"/>
        <dbReference type="ChEBI" id="CHEBI:16526"/>
        <dbReference type="ChEBI" id="CHEBI:57287"/>
        <dbReference type="ChEBI" id="CHEBI:57349"/>
        <dbReference type="ChEBI" id="CHEBI:57384"/>
        <dbReference type="ChEBI" id="CHEBI:57385"/>
    </reaction>
    <physiologicalReaction direction="left-to-right" evidence="2">
        <dbReference type="Rhea" id="RHEA:39168"/>
    </physiologicalReaction>
</comment>
<comment type="catalytic activity">
    <reaction evidence="2">
        <text>(9Z)-octadecenoyl-CoA + malonyl-CoA + H(+) = 3-oxo-(11Z)-eicosenoyl-CoA + CO2 + CoA</text>
        <dbReference type="Rhea" id="RHEA:36511"/>
        <dbReference type="ChEBI" id="CHEBI:15378"/>
        <dbReference type="ChEBI" id="CHEBI:16526"/>
        <dbReference type="ChEBI" id="CHEBI:57287"/>
        <dbReference type="ChEBI" id="CHEBI:57384"/>
        <dbReference type="ChEBI" id="CHEBI:57387"/>
        <dbReference type="ChEBI" id="CHEBI:74011"/>
    </reaction>
    <physiologicalReaction direction="left-to-right" evidence="2">
        <dbReference type="Rhea" id="RHEA:36512"/>
    </physiologicalReaction>
</comment>
<comment type="catalytic activity">
    <reaction evidence="2">
        <text>(9Z,12Z)-octadecadienoyl-CoA + malonyl-CoA + H(+) = (11Z,14Z)-3-oxoicosa-11,14-dienoyl-CoA + CO2 + CoA</text>
        <dbReference type="Rhea" id="RHEA:36503"/>
        <dbReference type="ChEBI" id="CHEBI:15378"/>
        <dbReference type="ChEBI" id="CHEBI:16526"/>
        <dbReference type="ChEBI" id="CHEBI:57287"/>
        <dbReference type="ChEBI" id="CHEBI:57383"/>
        <dbReference type="ChEBI" id="CHEBI:57384"/>
        <dbReference type="ChEBI" id="CHEBI:74012"/>
    </reaction>
    <physiologicalReaction direction="left-to-right" evidence="2">
        <dbReference type="Rhea" id="RHEA:36504"/>
    </physiologicalReaction>
</comment>
<comment type="catalytic activity">
    <reaction evidence="2">
        <text>(9Z,12Z,15Z)-octadecatrienoyl-CoA + malonyl-CoA + H(+) = (11Z,14Z,17Z)-3-oxoeicosatrienoyl-CoA + CO2 + CoA</text>
        <dbReference type="Rhea" id="RHEA:36523"/>
        <dbReference type="ChEBI" id="CHEBI:15378"/>
        <dbReference type="ChEBI" id="CHEBI:16526"/>
        <dbReference type="ChEBI" id="CHEBI:57287"/>
        <dbReference type="ChEBI" id="CHEBI:57384"/>
        <dbReference type="ChEBI" id="CHEBI:74034"/>
        <dbReference type="ChEBI" id="CHEBI:74054"/>
    </reaction>
    <physiologicalReaction direction="left-to-right" evidence="2">
        <dbReference type="Rhea" id="RHEA:36524"/>
    </physiologicalReaction>
</comment>
<comment type="activity regulation">
    <text evidence="2">The reaction is stimulated by the presence of HSD17B12, the enzyme catalyzing the second step of the elongation cycle.</text>
</comment>
<comment type="pathway">
    <text evidence="3 5">Lipid metabolism; fatty acid biosynthesis.</text>
</comment>
<comment type="subcellular location">
    <subcellularLocation>
        <location evidence="3">Endoplasmic reticulum membrane</location>
        <topology evidence="3">Multi-pass membrane protein</topology>
    </subcellularLocation>
</comment>
<comment type="tissue specificity">
    <text evidence="4">Expressed in liver and barely in brain.</text>
</comment>
<comment type="PTM">
    <text evidence="3">N-Glycosylated.</text>
</comment>
<comment type="similarity">
    <text evidence="3">Belongs to the ELO family. ELOVL6 subfamily.</text>
</comment>
<feature type="chain" id="PRO_0000282847" description="Very long chain fatty acid elongase 6">
    <location>
        <begin position="1"/>
        <end position="267"/>
    </location>
</feature>
<feature type="transmembrane region" description="Helical" evidence="3">
    <location>
        <begin position="34"/>
        <end position="51"/>
    </location>
</feature>
<feature type="transmembrane region" description="Helical" evidence="3">
    <location>
        <begin position="70"/>
        <end position="90"/>
    </location>
</feature>
<feature type="transmembrane region" description="Helical" evidence="3">
    <location>
        <begin position="111"/>
        <end position="131"/>
    </location>
</feature>
<feature type="transmembrane region" description="Helical" evidence="3">
    <location>
        <begin position="136"/>
        <end position="156"/>
    </location>
</feature>
<feature type="transmembrane region" description="Helical" evidence="3">
    <location>
        <begin position="159"/>
        <end position="179"/>
    </location>
</feature>
<feature type="transmembrane region" description="Helical" evidence="3">
    <location>
        <begin position="197"/>
        <end position="217"/>
    </location>
</feature>
<feature type="transmembrane region" description="Helical" evidence="3">
    <location>
        <begin position="234"/>
        <end position="254"/>
    </location>
</feature>
<feature type="glycosylation site" description="N-linked (GlcNAc...) asparagine" evidence="3">
    <location>
        <position position="2"/>
    </location>
</feature>
<dbReference type="EC" id="2.3.1.199" evidence="3 4 5"/>
<dbReference type="EMBL" id="AB071986">
    <property type="protein sequence ID" value="BAB69888.1"/>
    <property type="molecule type" value="mRNA"/>
</dbReference>
<dbReference type="RefSeq" id="NP_599210.1">
    <property type="nucleotide sequence ID" value="NM_134383.3"/>
</dbReference>
<dbReference type="RefSeq" id="XP_008759707.1">
    <property type="nucleotide sequence ID" value="XM_008761485.1"/>
</dbReference>
<dbReference type="RefSeq" id="XP_017452388.1">
    <property type="nucleotide sequence ID" value="XM_017596899.1"/>
</dbReference>
<dbReference type="SMR" id="Q920L6"/>
<dbReference type="FunCoup" id="Q920L6">
    <property type="interactions" value="1443"/>
</dbReference>
<dbReference type="STRING" id="10116.ENSRNOP00000014155"/>
<dbReference type="SwissLipids" id="SLP:000000453"/>
<dbReference type="GlyCosmos" id="Q920L6">
    <property type="glycosylation" value="1 site, No reported glycans"/>
</dbReference>
<dbReference type="GlyGen" id="Q920L6">
    <property type="glycosylation" value="1 site"/>
</dbReference>
<dbReference type="PhosphoSitePlus" id="Q920L6"/>
<dbReference type="PaxDb" id="10116-ENSRNOP00000014155"/>
<dbReference type="Ensembl" id="ENSRNOT00000014155.6">
    <property type="protein sequence ID" value="ENSRNOP00000014155.2"/>
    <property type="gene ID" value="ENSRNOG00000048949.2"/>
</dbReference>
<dbReference type="GeneID" id="171402"/>
<dbReference type="KEGG" id="rno:171402"/>
<dbReference type="UCSC" id="RGD:620585">
    <property type="organism name" value="rat"/>
</dbReference>
<dbReference type="AGR" id="RGD:620585"/>
<dbReference type="CTD" id="79071"/>
<dbReference type="RGD" id="620585">
    <property type="gene designation" value="Elovl6"/>
</dbReference>
<dbReference type="eggNOG" id="KOG3072">
    <property type="taxonomic scope" value="Eukaryota"/>
</dbReference>
<dbReference type="GeneTree" id="ENSGT01050000244965"/>
<dbReference type="HOGENOM" id="CLU_048483_1_1_1"/>
<dbReference type="InParanoid" id="Q920L6"/>
<dbReference type="OMA" id="PISWVPI"/>
<dbReference type="OrthoDB" id="10259681at2759"/>
<dbReference type="PhylomeDB" id="Q920L6"/>
<dbReference type="TreeFam" id="TF106467"/>
<dbReference type="Reactome" id="R-RNO-75876">
    <property type="pathway name" value="Synthesis of very long-chain fatty acyl-CoAs"/>
</dbReference>
<dbReference type="UniPathway" id="UPA00094"/>
<dbReference type="PRO" id="PR:Q920L6"/>
<dbReference type="Proteomes" id="UP000002494">
    <property type="component" value="Chromosome 2"/>
</dbReference>
<dbReference type="Bgee" id="ENSRNOG00000010468">
    <property type="expression patterns" value="Expressed in duodenum and 13 other cell types or tissues"/>
</dbReference>
<dbReference type="GO" id="GO:0005783">
    <property type="term" value="C:endoplasmic reticulum"/>
    <property type="evidence" value="ECO:0000250"/>
    <property type="project" value="UniProtKB"/>
</dbReference>
<dbReference type="GO" id="GO:0005789">
    <property type="term" value="C:endoplasmic reticulum membrane"/>
    <property type="evidence" value="ECO:0000266"/>
    <property type="project" value="RGD"/>
</dbReference>
<dbReference type="GO" id="GO:0009923">
    <property type="term" value="C:fatty acid elongase complex"/>
    <property type="evidence" value="ECO:0000266"/>
    <property type="project" value="RGD"/>
</dbReference>
<dbReference type="GO" id="GO:0016747">
    <property type="term" value="F:acyltransferase activity, transferring groups other than amino-acyl groups"/>
    <property type="evidence" value="ECO:0000266"/>
    <property type="project" value="RGD"/>
</dbReference>
<dbReference type="GO" id="GO:0009922">
    <property type="term" value="F:fatty acid elongase activity"/>
    <property type="evidence" value="ECO:0000314"/>
    <property type="project" value="UniProtKB"/>
</dbReference>
<dbReference type="GO" id="GO:0030497">
    <property type="term" value="P:fatty acid elongation"/>
    <property type="evidence" value="ECO:0000266"/>
    <property type="project" value="RGD"/>
</dbReference>
<dbReference type="GO" id="GO:0034625">
    <property type="term" value="P:fatty acid elongation, monounsaturated fatty acid"/>
    <property type="evidence" value="ECO:0000314"/>
    <property type="project" value="UniProtKB"/>
</dbReference>
<dbReference type="GO" id="GO:0034626">
    <property type="term" value="P:fatty acid elongation, polyunsaturated fatty acid"/>
    <property type="evidence" value="ECO:0000318"/>
    <property type="project" value="GO_Central"/>
</dbReference>
<dbReference type="GO" id="GO:0019367">
    <property type="term" value="P:fatty acid elongation, saturated fatty acid"/>
    <property type="evidence" value="ECO:0000314"/>
    <property type="project" value="UniProtKB"/>
</dbReference>
<dbReference type="GO" id="GO:0042759">
    <property type="term" value="P:long-chain fatty acid biosynthetic process"/>
    <property type="evidence" value="ECO:0000250"/>
    <property type="project" value="UniProtKB"/>
</dbReference>
<dbReference type="GO" id="GO:0035338">
    <property type="term" value="P:long-chain fatty-acyl-CoA biosynthetic process"/>
    <property type="evidence" value="ECO:0007669"/>
    <property type="project" value="UniProtKB-UniRule"/>
</dbReference>
<dbReference type="GO" id="GO:0120162">
    <property type="term" value="P:positive regulation of cold-induced thermogenesis"/>
    <property type="evidence" value="ECO:0000250"/>
    <property type="project" value="YuBioLab"/>
</dbReference>
<dbReference type="GO" id="GO:0030148">
    <property type="term" value="P:sphingolipid biosynthetic process"/>
    <property type="evidence" value="ECO:0000318"/>
    <property type="project" value="GO_Central"/>
</dbReference>
<dbReference type="GO" id="GO:0006636">
    <property type="term" value="P:unsaturated fatty acid biosynthetic process"/>
    <property type="evidence" value="ECO:0007669"/>
    <property type="project" value="UniProtKB-UniRule"/>
</dbReference>
<dbReference type="GO" id="GO:0042761">
    <property type="term" value="P:very long-chain fatty acid biosynthetic process"/>
    <property type="evidence" value="ECO:0000318"/>
    <property type="project" value="GO_Central"/>
</dbReference>
<dbReference type="HAMAP" id="MF_03206">
    <property type="entry name" value="VLCF_elongase_6"/>
    <property type="match status" value="1"/>
</dbReference>
<dbReference type="InterPro" id="IPR030457">
    <property type="entry name" value="ELO_CS"/>
</dbReference>
<dbReference type="InterPro" id="IPR002076">
    <property type="entry name" value="ELO_fam"/>
</dbReference>
<dbReference type="InterPro" id="IPR033675">
    <property type="entry name" value="ELOVL6"/>
</dbReference>
<dbReference type="PANTHER" id="PTHR11157:SF125">
    <property type="entry name" value="ELONGATION OF VERY LONG CHAIN FATTY ACIDS PROTEIN 6"/>
    <property type="match status" value="1"/>
</dbReference>
<dbReference type="PANTHER" id="PTHR11157">
    <property type="entry name" value="FATTY ACID ACYL TRANSFERASE-RELATED"/>
    <property type="match status" value="1"/>
</dbReference>
<dbReference type="Pfam" id="PF01151">
    <property type="entry name" value="ELO"/>
    <property type="match status" value="1"/>
</dbReference>
<dbReference type="PROSITE" id="PS01188">
    <property type="entry name" value="ELO"/>
    <property type="match status" value="1"/>
</dbReference>
<gene>
    <name evidence="3" type="primary">Elovl6</name>
    <name type="synonym">Face</name>
    <name type="synonym">Lce</name>
</gene>
<proteinExistence type="evidence at protein level"/>
<keyword id="KW-0256">Endoplasmic reticulum</keyword>
<keyword id="KW-0275">Fatty acid biosynthesis</keyword>
<keyword id="KW-0276">Fatty acid metabolism</keyword>
<keyword id="KW-0325">Glycoprotein</keyword>
<keyword id="KW-0444">Lipid biosynthesis</keyword>
<keyword id="KW-0443">Lipid metabolism</keyword>
<keyword id="KW-0472">Membrane</keyword>
<keyword id="KW-1185">Reference proteome</keyword>
<keyword id="KW-0808">Transferase</keyword>
<keyword id="KW-0812">Transmembrane</keyword>
<keyword id="KW-1133">Transmembrane helix</keyword>